<comment type="function">
    <text evidence="1">Part of the phosphoribosylformylglycinamidine synthase complex involved in the purines biosynthetic pathway. Catalyzes the ATP-dependent conversion of formylglycinamide ribonucleotide (FGAR) and glutamine to yield formylglycinamidine ribonucleotide (FGAM) and glutamate. The FGAM synthase complex is composed of three subunits. PurQ produces an ammonia molecule by converting glutamine to glutamate. PurL transfers the ammonia molecule to FGAR to form FGAM in an ATP-dependent manner. PurS interacts with PurQ and PurL and is thought to assist in the transfer of the ammonia molecule from PurQ to PurL.</text>
</comment>
<comment type="catalytic activity">
    <reaction evidence="1">
        <text>N(2)-formyl-N(1)-(5-phospho-beta-D-ribosyl)glycinamide + L-glutamine + ATP + H2O = 2-formamido-N(1)-(5-O-phospho-beta-D-ribosyl)acetamidine + L-glutamate + ADP + phosphate + H(+)</text>
        <dbReference type="Rhea" id="RHEA:17129"/>
        <dbReference type="ChEBI" id="CHEBI:15377"/>
        <dbReference type="ChEBI" id="CHEBI:15378"/>
        <dbReference type="ChEBI" id="CHEBI:29985"/>
        <dbReference type="ChEBI" id="CHEBI:30616"/>
        <dbReference type="ChEBI" id="CHEBI:43474"/>
        <dbReference type="ChEBI" id="CHEBI:58359"/>
        <dbReference type="ChEBI" id="CHEBI:147286"/>
        <dbReference type="ChEBI" id="CHEBI:147287"/>
        <dbReference type="ChEBI" id="CHEBI:456216"/>
        <dbReference type="EC" id="6.3.5.3"/>
    </reaction>
</comment>
<comment type="catalytic activity">
    <reaction evidence="1">
        <text>L-glutamine + H2O = L-glutamate + NH4(+)</text>
        <dbReference type="Rhea" id="RHEA:15889"/>
        <dbReference type="ChEBI" id="CHEBI:15377"/>
        <dbReference type="ChEBI" id="CHEBI:28938"/>
        <dbReference type="ChEBI" id="CHEBI:29985"/>
        <dbReference type="ChEBI" id="CHEBI:58359"/>
        <dbReference type="EC" id="3.5.1.2"/>
    </reaction>
</comment>
<comment type="pathway">
    <text evidence="1">Purine metabolism; IMP biosynthesis via de novo pathway; 5-amino-1-(5-phospho-D-ribosyl)imidazole from N(2)-formyl-N(1)-(5-phospho-D-ribosyl)glycinamide: step 1/2.</text>
</comment>
<comment type="subunit">
    <text evidence="1">Part of the FGAM synthase complex composed of 1 PurL, 1 PurQ and 2 PurS subunits.</text>
</comment>
<comment type="subcellular location">
    <subcellularLocation>
        <location evidence="1">Cytoplasm</location>
    </subcellularLocation>
</comment>
<protein>
    <recommendedName>
        <fullName evidence="1">Phosphoribosylformylglycinamidine synthase subunit PurQ</fullName>
        <shortName evidence="1">FGAM synthase</shortName>
        <ecNumber evidence="1">6.3.5.3</ecNumber>
    </recommendedName>
    <alternativeName>
        <fullName evidence="1">Formylglycinamide ribonucleotide amidotransferase subunit I</fullName>
        <shortName evidence="1">FGAR amidotransferase I</shortName>
        <shortName evidence="1">FGAR-AT I</shortName>
    </alternativeName>
    <alternativeName>
        <fullName evidence="1">Glutaminase PurQ</fullName>
        <ecNumber evidence="1">3.5.1.2</ecNumber>
    </alternativeName>
    <alternativeName>
        <fullName evidence="1">Phosphoribosylformylglycinamidine synthase subunit I</fullName>
    </alternativeName>
</protein>
<evidence type="ECO:0000255" key="1">
    <source>
        <dbReference type="HAMAP-Rule" id="MF_00421"/>
    </source>
</evidence>
<name>PURQ_MYCBO</name>
<sequence>MTARIGVVTFPGTLDDVDAARAARQVGAEVVSLWHADADLKGVDAVVVPGGFSYGDYLRAGAIARFAPVMDEVVAAADRGMPVLGICNGFQVLCEAGLLPGALTRNVGLHFICRDVWLRVASTSTAWTSRFEPDADLLVPLKSGEGRYVAPEKVLDELEGEGRVVFRYHDNVNGSLRDIAGICSANGRVVGLMPHPEHAIEALTGPSDDGLGLFYSALDAVLTG</sequence>
<proteinExistence type="inferred from homology"/>
<feature type="chain" id="PRO_0000100569" description="Phosphoribosylformylglycinamidine synthase subunit PurQ">
    <location>
        <begin position="1"/>
        <end position="224"/>
    </location>
</feature>
<feature type="domain" description="Glutamine amidotransferase type-1" evidence="1">
    <location>
        <begin position="4"/>
        <end position="224"/>
    </location>
</feature>
<feature type="active site" description="Nucleophile" evidence="1">
    <location>
        <position position="87"/>
    </location>
</feature>
<feature type="active site" evidence="1">
    <location>
        <position position="195"/>
    </location>
</feature>
<feature type="active site" evidence="1">
    <location>
        <position position="197"/>
    </location>
</feature>
<reference key="1">
    <citation type="journal article" date="2003" name="Proc. Natl. Acad. Sci. U.S.A.">
        <title>The complete genome sequence of Mycobacterium bovis.</title>
        <authorList>
            <person name="Garnier T."/>
            <person name="Eiglmeier K."/>
            <person name="Camus J.-C."/>
            <person name="Medina N."/>
            <person name="Mansoor H."/>
            <person name="Pryor M."/>
            <person name="Duthoy S."/>
            <person name="Grondin S."/>
            <person name="Lacroix C."/>
            <person name="Monsempe C."/>
            <person name="Simon S."/>
            <person name="Harris B."/>
            <person name="Atkin R."/>
            <person name="Doggett J."/>
            <person name="Mayes R."/>
            <person name="Keating L."/>
            <person name="Wheeler P.R."/>
            <person name="Parkhill J."/>
            <person name="Barrell B.G."/>
            <person name="Cole S.T."/>
            <person name="Gordon S.V."/>
            <person name="Hewinson R.G."/>
        </authorList>
    </citation>
    <scope>NUCLEOTIDE SEQUENCE [LARGE SCALE GENOMIC DNA]</scope>
    <source>
        <strain>ATCC BAA-935 / AF2122/97</strain>
    </source>
</reference>
<reference key="2">
    <citation type="journal article" date="2017" name="Genome Announc.">
        <title>Updated reference genome sequence and annotation of Mycobacterium bovis AF2122/97.</title>
        <authorList>
            <person name="Malone K.M."/>
            <person name="Farrell D."/>
            <person name="Stuber T.P."/>
            <person name="Schubert O.T."/>
            <person name="Aebersold R."/>
            <person name="Robbe-Austerman S."/>
            <person name="Gordon S.V."/>
        </authorList>
    </citation>
    <scope>NUCLEOTIDE SEQUENCE [LARGE SCALE GENOMIC DNA]</scope>
    <scope>GENOME REANNOTATION</scope>
    <source>
        <strain>ATCC BAA-935 / AF2122/97</strain>
    </source>
</reference>
<keyword id="KW-0067">ATP-binding</keyword>
<keyword id="KW-0963">Cytoplasm</keyword>
<keyword id="KW-0315">Glutamine amidotransferase</keyword>
<keyword id="KW-0378">Hydrolase</keyword>
<keyword id="KW-0436">Ligase</keyword>
<keyword id="KW-0547">Nucleotide-binding</keyword>
<keyword id="KW-0658">Purine biosynthesis</keyword>
<keyword id="KW-1185">Reference proteome</keyword>
<accession>P65903</accession>
<accession>A0A1R3XWF4</accession>
<accession>P71841</accession>
<accession>X2BFY1</accession>
<gene>
    <name evidence="1" type="primary">purQ</name>
    <name type="ordered locus">BQ2027_MB0812</name>
</gene>
<dbReference type="EC" id="6.3.5.3" evidence="1"/>
<dbReference type="EC" id="3.5.1.2" evidence="1"/>
<dbReference type="EMBL" id="LT708304">
    <property type="protein sequence ID" value="SIT99411.1"/>
    <property type="molecule type" value="Genomic_DNA"/>
</dbReference>
<dbReference type="RefSeq" id="NP_854470.1">
    <property type="nucleotide sequence ID" value="NC_002945.3"/>
</dbReference>
<dbReference type="RefSeq" id="WP_003403995.1">
    <property type="nucleotide sequence ID" value="NC_002945.4"/>
</dbReference>
<dbReference type="SMR" id="P65903"/>
<dbReference type="KEGG" id="mbo:BQ2027_MB0812"/>
<dbReference type="PATRIC" id="fig|233413.5.peg.884"/>
<dbReference type="UniPathway" id="UPA00074">
    <property type="reaction ID" value="UER00128"/>
</dbReference>
<dbReference type="Proteomes" id="UP000001419">
    <property type="component" value="Chromosome"/>
</dbReference>
<dbReference type="GO" id="GO:0005737">
    <property type="term" value="C:cytoplasm"/>
    <property type="evidence" value="ECO:0007669"/>
    <property type="project" value="UniProtKB-SubCell"/>
</dbReference>
<dbReference type="GO" id="GO:0005524">
    <property type="term" value="F:ATP binding"/>
    <property type="evidence" value="ECO:0007669"/>
    <property type="project" value="UniProtKB-KW"/>
</dbReference>
<dbReference type="GO" id="GO:0004359">
    <property type="term" value="F:glutaminase activity"/>
    <property type="evidence" value="ECO:0007669"/>
    <property type="project" value="UniProtKB-EC"/>
</dbReference>
<dbReference type="GO" id="GO:0004642">
    <property type="term" value="F:phosphoribosylformylglycinamidine synthase activity"/>
    <property type="evidence" value="ECO:0007669"/>
    <property type="project" value="UniProtKB-UniRule"/>
</dbReference>
<dbReference type="GO" id="GO:0006189">
    <property type="term" value="P:'de novo' IMP biosynthetic process"/>
    <property type="evidence" value="ECO:0007669"/>
    <property type="project" value="UniProtKB-UniRule"/>
</dbReference>
<dbReference type="CDD" id="cd01740">
    <property type="entry name" value="GATase1_FGAR_AT"/>
    <property type="match status" value="1"/>
</dbReference>
<dbReference type="FunFam" id="3.40.50.880:FF:000019">
    <property type="entry name" value="Phosphoribosylformylglycinamidine synthase subunit PurQ"/>
    <property type="match status" value="1"/>
</dbReference>
<dbReference type="Gene3D" id="3.40.50.880">
    <property type="match status" value="1"/>
</dbReference>
<dbReference type="HAMAP" id="MF_00421">
    <property type="entry name" value="PurQ"/>
    <property type="match status" value="1"/>
</dbReference>
<dbReference type="InterPro" id="IPR029062">
    <property type="entry name" value="Class_I_gatase-like"/>
</dbReference>
<dbReference type="InterPro" id="IPR010075">
    <property type="entry name" value="PRibForGlyAmidine_synth_PurQ"/>
</dbReference>
<dbReference type="NCBIfam" id="TIGR01737">
    <property type="entry name" value="FGAM_synth_I"/>
    <property type="match status" value="1"/>
</dbReference>
<dbReference type="NCBIfam" id="NF002957">
    <property type="entry name" value="PRK03619.1"/>
    <property type="match status" value="1"/>
</dbReference>
<dbReference type="PANTHER" id="PTHR47552">
    <property type="entry name" value="PHOSPHORIBOSYLFORMYLGLYCINAMIDINE SYNTHASE SUBUNIT PURQ"/>
    <property type="match status" value="1"/>
</dbReference>
<dbReference type="PANTHER" id="PTHR47552:SF1">
    <property type="entry name" value="PHOSPHORIBOSYLFORMYLGLYCINAMIDINE SYNTHASE SUBUNIT PURQ"/>
    <property type="match status" value="1"/>
</dbReference>
<dbReference type="Pfam" id="PF13507">
    <property type="entry name" value="GATase_5"/>
    <property type="match status" value="1"/>
</dbReference>
<dbReference type="PIRSF" id="PIRSF001586">
    <property type="entry name" value="FGAM_synth_I"/>
    <property type="match status" value="1"/>
</dbReference>
<dbReference type="SMART" id="SM01211">
    <property type="entry name" value="GATase_5"/>
    <property type="match status" value="1"/>
</dbReference>
<dbReference type="SUPFAM" id="SSF52317">
    <property type="entry name" value="Class I glutamine amidotransferase-like"/>
    <property type="match status" value="1"/>
</dbReference>
<dbReference type="PROSITE" id="PS51273">
    <property type="entry name" value="GATASE_TYPE_1"/>
    <property type="match status" value="1"/>
</dbReference>
<organism>
    <name type="scientific">Mycobacterium bovis (strain ATCC BAA-935 / AF2122/97)</name>
    <dbReference type="NCBI Taxonomy" id="233413"/>
    <lineage>
        <taxon>Bacteria</taxon>
        <taxon>Bacillati</taxon>
        <taxon>Actinomycetota</taxon>
        <taxon>Actinomycetes</taxon>
        <taxon>Mycobacteriales</taxon>
        <taxon>Mycobacteriaceae</taxon>
        <taxon>Mycobacterium</taxon>
        <taxon>Mycobacterium tuberculosis complex</taxon>
    </lineage>
</organism>